<reference evidence="13 16" key="1">
    <citation type="journal article" date="2002" name="Mech. Dev.">
        <title>Foxp4: a novel member of the Foxp subfamily of winged-helix genes co-expressed with Foxp1 and Foxp2 in pulmonary and gut tissues.</title>
        <authorList>
            <person name="Lu M.M."/>
            <person name="Li S."/>
            <person name="Yang H."/>
            <person name="Morrisey E.E."/>
        </authorList>
    </citation>
    <scope>NUCLEOTIDE SEQUENCE [MRNA] (ISOFORM 3)</scope>
    <scope>TISSUE SPECIFICITY</scope>
    <scope>DEVELOPMENTAL STAGE</scope>
    <source>
        <strain evidence="16">C57BL/6J</strain>
        <tissue evidence="6">Lung</tissue>
    </source>
</reference>
<reference evidence="13 18" key="2">
    <citation type="submission" date="2000-12" db="EMBL/GenBank/DDBJ databases">
        <title>Isolation and characterization of novel human and mouse genes, which are expressed in the digestive tract.</title>
        <authorList>
            <person name="Daigo Y."/>
            <person name="Takayama I."/>
            <person name="Fujino M.A."/>
        </authorList>
    </citation>
    <scope>NUCLEOTIDE SEQUENCE [MRNA] (ISOFORM 2)</scope>
</reference>
<reference evidence="13 17" key="3">
    <citation type="journal article" date="2005" name="Science">
        <title>The transcriptional landscape of the mammalian genome.</title>
        <authorList>
            <person name="Carninci P."/>
            <person name="Kasukawa T."/>
            <person name="Katayama S."/>
            <person name="Gough J."/>
            <person name="Frith M.C."/>
            <person name="Maeda N."/>
            <person name="Oyama R."/>
            <person name="Ravasi T."/>
            <person name="Lenhard B."/>
            <person name="Wells C."/>
            <person name="Kodzius R."/>
            <person name="Shimokawa K."/>
            <person name="Bajic V.B."/>
            <person name="Brenner S.E."/>
            <person name="Batalov S."/>
            <person name="Forrest A.R."/>
            <person name="Zavolan M."/>
            <person name="Davis M.J."/>
            <person name="Wilming L.G."/>
            <person name="Aidinis V."/>
            <person name="Allen J.E."/>
            <person name="Ambesi-Impiombato A."/>
            <person name="Apweiler R."/>
            <person name="Aturaliya R.N."/>
            <person name="Bailey T.L."/>
            <person name="Bansal M."/>
            <person name="Baxter L."/>
            <person name="Beisel K.W."/>
            <person name="Bersano T."/>
            <person name="Bono H."/>
            <person name="Chalk A.M."/>
            <person name="Chiu K.P."/>
            <person name="Choudhary V."/>
            <person name="Christoffels A."/>
            <person name="Clutterbuck D.R."/>
            <person name="Crowe M.L."/>
            <person name="Dalla E."/>
            <person name="Dalrymple B.P."/>
            <person name="de Bono B."/>
            <person name="Della Gatta G."/>
            <person name="di Bernardo D."/>
            <person name="Down T."/>
            <person name="Engstrom P."/>
            <person name="Fagiolini M."/>
            <person name="Faulkner G."/>
            <person name="Fletcher C.F."/>
            <person name="Fukushima T."/>
            <person name="Furuno M."/>
            <person name="Futaki S."/>
            <person name="Gariboldi M."/>
            <person name="Georgii-Hemming P."/>
            <person name="Gingeras T.R."/>
            <person name="Gojobori T."/>
            <person name="Green R.E."/>
            <person name="Gustincich S."/>
            <person name="Harbers M."/>
            <person name="Hayashi Y."/>
            <person name="Hensch T.K."/>
            <person name="Hirokawa N."/>
            <person name="Hill D."/>
            <person name="Huminiecki L."/>
            <person name="Iacono M."/>
            <person name="Ikeo K."/>
            <person name="Iwama A."/>
            <person name="Ishikawa T."/>
            <person name="Jakt M."/>
            <person name="Kanapin A."/>
            <person name="Katoh M."/>
            <person name="Kawasawa Y."/>
            <person name="Kelso J."/>
            <person name="Kitamura H."/>
            <person name="Kitano H."/>
            <person name="Kollias G."/>
            <person name="Krishnan S.P."/>
            <person name="Kruger A."/>
            <person name="Kummerfeld S.K."/>
            <person name="Kurochkin I.V."/>
            <person name="Lareau L.F."/>
            <person name="Lazarevic D."/>
            <person name="Lipovich L."/>
            <person name="Liu J."/>
            <person name="Liuni S."/>
            <person name="McWilliam S."/>
            <person name="Madan Babu M."/>
            <person name="Madera M."/>
            <person name="Marchionni L."/>
            <person name="Matsuda H."/>
            <person name="Matsuzawa S."/>
            <person name="Miki H."/>
            <person name="Mignone F."/>
            <person name="Miyake S."/>
            <person name="Morris K."/>
            <person name="Mottagui-Tabar S."/>
            <person name="Mulder N."/>
            <person name="Nakano N."/>
            <person name="Nakauchi H."/>
            <person name="Ng P."/>
            <person name="Nilsson R."/>
            <person name="Nishiguchi S."/>
            <person name="Nishikawa S."/>
            <person name="Nori F."/>
            <person name="Ohara O."/>
            <person name="Okazaki Y."/>
            <person name="Orlando V."/>
            <person name="Pang K.C."/>
            <person name="Pavan W.J."/>
            <person name="Pavesi G."/>
            <person name="Pesole G."/>
            <person name="Petrovsky N."/>
            <person name="Piazza S."/>
            <person name="Reed J."/>
            <person name="Reid J.F."/>
            <person name="Ring B.Z."/>
            <person name="Ringwald M."/>
            <person name="Rost B."/>
            <person name="Ruan Y."/>
            <person name="Salzberg S.L."/>
            <person name="Sandelin A."/>
            <person name="Schneider C."/>
            <person name="Schoenbach C."/>
            <person name="Sekiguchi K."/>
            <person name="Semple C.A."/>
            <person name="Seno S."/>
            <person name="Sessa L."/>
            <person name="Sheng Y."/>
            <person name="Shibata Y."/>
            <person name="Shimada H."/>
            <person name="Shimada K."/>
            <person name="Silva D."/>
            <person name="Sinclair B."/>
            <person name="Sperling S."/>
            <person name="Stupka E."/>
            <person name="Sugiura K."/>
            <person name="Sultana R."/>
            <person name="Takenaka Y."/>
            <person name="Taki K."/>
            <person name="Tammoja K."/>
            <person name="Tan S.L."/>
            <person name="Tang S."/>
            <person name="Taylor M.S."/>
            <person name="Tegner J."/>
            <person name="Teichmann S.A."/>
            <person name="Ueda H.R."/>
            <person name="van Nimwegen E."/>
            <person name="Verardo R."/>
            <person name="Wei C.L."/>
            <person name="Yagi K."/>
            <person name="Yamanishi H."/>
            <person name="Zabarovsky E."/>
            <person name="Zhu S."/>
            <person name="Zimmer A."/>
            <person name="Hide W."/>
            <person name="Bult C."/>
            <person name="Grimmond S.M."/>
            <person name="Teasdale R.D."/>
            <person name="Liu E.T."/>
            <person name="Brusic V."/>
            <person name="Quackenbush J."/>
            <person name="Wahlestedt C."/>
            <person name="Mattick J.S."/>
            <person name="Hume D.A."/>
            <person name="Kai C."/>
            <person name="Sasaki D."/>
            <person name="Tomaru Y."/>
            <person name="Fukuda S."/>
            <person name="Kanamori-Katayama M."/>
            <person name="Suzuki M."/>
            <person name="Aoki J."/>
            <person name="Arakawa T."/>
            <person name="Iida J."/>
            <person name="Imamura K."/>
            <person name="Itoh M."/>
            <person name="Kato T."/>
            <person name="Kawaji H."/>
            <person name="Kawagashira N."/>
            <person name="Kawashima T."/>
            <person name="Kojima M."/>
            <person name="Kondo S."/>
            <person name="Konno H."/>
            <person name="Nakano K."/>
            <person name="Ninomiya N."/>
            <person name="Nishio T."/>
            <person name="Okada M."/>
            <person name="Plessy C."/>
            <person name="Shibata K."/>
            <person name="Shiraki T."/>
            <person name="Suzuki S."/>
            <person name="Tagami M."/>
            <person name="Waki K."/>
            <person name="Watahiki A."/>
            <person name="Okamura-Oho Y."/>
            <person name="Suzuki H."/>
            <person name="Kawai J."/>
            <person name="Hayashizaki Y."/>
        </authorList>
    </citation>
    <scope>NUCLEOTIDE SEQUENCE [LARGE SCALE MRNA] (ISOFORM 1)</scope>
    <source>
        <strain evidence="17">C57BL/6J</strain>
        <tissue evidence="17">Lung</tissue>
    </source>
</reference>
<reference evidence="13 15" key="4">
    <citation type="journal article" date="2004" name="Genome Res.">
        <title>The status, quality, and expansion of the NIH full-length cDNA project: the Mammalian Gene Collection (MGC).</title>
        <authorList>
            <consortium name="The MGC Project Team"/>
        </authorList>
    </citation>
    <scope>NUCLEOTIDE SEQUENCE [LARGE SCALE MRNA] (ISOFORMS 2 AND 3)</scope>
    <source>
        <strain evidence="15">C57BL/6J</strain>
        <strain evidence="14">FVB/N</strain>
        <tissue evidence="15">Brain</tissue>
        <tissue evidence="8">Mammary gland</tissue>
    </source>
</reference>
<reference evidence="13" key="5">
    <citation type="journal article" date="2003" name="Biochim. Biophys. Acta">
        <title>FoxP4, a novel forkhead transcription factor.</title>
        <authorList>
            <person name="Teufel A."/>
            <person name="Wong E.A."/>
            <person name="Mukhopadhyay M."/>
            <person name="Malik N."/>
            <person name="Westphal H."/>
        </authorList>
    </citation>
    <scope>TISSUE SPECIFICITY</scope>
    <scope>DEVELOPMENTAL STAGE</scope>
</reference>
<reference evidence="13" key="6">
    <citation type="journal article" date="2004" name="Mol. Cell. Biol.">
        <title>Transcriptional and DNA binding activity of the Foxp1/2/4 family is modulated by heterotypic and homotypic protein interactions.</title>
        <authorList>
            <person name="Li S."/>
            <person name="Weidenfeld J."/>
            <person name="Morrisey E.E."/>
        </authorList>
    </citation>
    <scope>FUNCTION</scope>
    <scope>DIMERIZATION</scope>
    <scope>DOMAIN</scope>
    <scope>MUTAGENESIS OF GLU-366</scope>
</reference>
<gene>
    <name evidence="19" type="primary">Foxp4</name>
</gene>
<protein>
    <recommendedName>
        <fullName>Forkhead box protein P4</fullName>
    </recommendedName>
    <alternativeName>
        <fullName>Fork head-related protein-like A</fullName>
        <shortName>mFKHLA</shortName>
    </alternativeName>
</protein>
<feature type="chain" id="PRO_0000247653" description="Forkhead box protein P4">
    <location>
        <begin position="1"/>
        <end position="795"/>
    </location>
</feature>
<feature type="zinc finger region" description="C2H2-type" evidence="2">
    <location>
        <begin position="312"/>
        <end position="337"/>
    </location>
</feature>
<feature type="DNA-binding region" description="Fork-head" evidence="3">
    <location>
        <begin position="459"/>
        <end position="549"/>
    </location>
</feature>
<feature type="region of interest" description="Disordered" evidence="4">
    <location>
        <begin position="1"/>
        <end position="62"/>
    </location>
</feature>
<feature type="region of interest" description="Disordered" evidence="4">
    <location>
        <begin position="233"/>
        <end position="252"/>
    </location>
</feature>
<feature type="region of interest" description="Disordered" evidence="4">
    <location>
        <begin position="265"/>
        <end position="310"/>
    </location>
</feature>
<feature type="region of interest" description="Leucine-zipper">
    <location>
        <begin position="354"/>
        <end position="375"/>
    </location>
</feature>
<feature type="region of interest" description="Disordered" evidence="4">
    <location>
        <begin position="379"/>
        <end position="437"/>
    </location>
</feature>
<feature type="region of interest" description="Disordered" evidence="4">
    <location>
        <begin position="589"/>
        <end position="671"/>
    </location>
</feature>
<feature type="compositionally biased region" description="Polar residues" evidence="4">
    <location>
        <begin position="1"/>
        <end position="25"/>
    </location>
</feature>
<feature type="compositionally biased region" description="Low complexity" evidence="4">
    <location>
        <begin position="36"/>
        <end position="45"/>
    </location>
</feature>
<feature type="compositionally biased region" description="Basic and acidic residues" evidence="4">
    <location>
        <begin position="292"/>
        <end position="303"/>
    </location>
</feature>
<feature type="compositionally biased region" description="Polar residues" evidence="4">
    <location>
        <begin position="609"/>
        <end position="627"/>
    </location>
</feature>
<feature type="compositionally biased region" description="Basic and acidic residues" evidence="4">
    <location>
        <begin position="628"/>
        <end position="642"/>
    </location>
</feature>
<feature type="modified residue" description="Phosphoserine" evidence="1">
    <location>
        <position position="58"/>
    </location>
</feature>
<feature type="modified residue" description="Phosphoserine" evidence="1">
    <location>
        <position position="92"/>
    </location>
</feature>
<feature type="modified residue" description="Phosphoserine" evidence="1">
    <location>
        <position position="546"/>
    </location>
</feature>
<feature type="cross-link" description="Glycyl lysine isopeptide (Lys-Gly) (interchain with G-Cter in SUMO2)" evidence="1">
    <location>
        <position position="181"/>
    </location>
</feature>
<feature type="cross-link" description="Glycyl lysine isopeptide (Lys-Gly) (interchain with G-Cter in SUMO2)" evidence="1">
    <location>
        <position position="383"/>
    </location>
</feature>
<feature type="splice variant" id="VSP_052129" description="In isoform 3." evidence="10 11">
    <original>P</original>
    <variation>PLNPVPGSSSFSK</variation>
    <location>
        <position position="388"/>
    </location>
</feature>
<feature type="splice variant" id="VSP_052130" description="In isoform 2 and isoform 3." evidence="10 11 12">
    <original>P</original>
    <variation>S</variation>
    <location>
        <position position="672"/>
    </location>
</feature>
<feature type="splice variant" id="VSP_052131" description="In isoform 2 and isoform 3." evidence="10 11 12">
    <location>
        <begin position="673"/>
        <end position="795"/>
    </location>
</feature>
<feature type="mutagenesis site" description="Loss of dimerization. Almost complete loss of DNA-binding. Reduced transcriptional repression activity." evidence="7">
    <location>
        <position position="366"/>
    </location>
</feature>
<feature type="sequence conflict" description="In Ref. 2; AAN08624 and 4; AAH43702/AAH52407." evidence="13" ref="2 4">
    <original>A</original>
    <variation>AA</variation>
    <location>
        <position position="226"/>
    </location>
</feature>
<dbReference type="EMBL" id="AY135029">
    <property type="protein sequence ID" value="AAN08624.1"/>
    <property type="molecule type" value="mRNA"/>
</dbReference>
<dbReference type="EMBL" id="AB052766">
    <property type="protein sequence ID" value="BAC53799.1"/>
    <property type="molecule type" value="mRNA"/>
</dbReference>
<dbReference type="EMBL" id="AK004693">
    <property type="protein sequence ID" value="BAB23479.1"/>
    <property type="molecule type" value="mRNA"/>
</dbReference>
<dbReference type="EMBL" id="BC043702">
    <property type="protein sequence ID" value="AAH43702.1"/>
    <property type="molecule type" value="mRNA"/>
</dbReference>
<dbReference type="EMBL" id="BC052407">
    <property type="protein sequence ID" value="AAH52407.1"/>
    <property type="molecule type" value="mRNA"/>
</dbReference>
<dbReference type="EMBL" id="BC057110">
    <property type="protein sequence ID" value="AAH57110.1"/>
    <property type="molecule type" value="mRNA"/>
</dbReference>
<dbReference type="CCDS" id="CCDS50135.1">
    <molecule id="Q9DBY0-2"/>
</dbReference>
<dbReference type="RefSeq" id="NP_001104294.1">
    <property type="nucleotide sequence ID" value="NM_001110824.1"/>
</dbReference>
<dbReference type="RefSeq" id="NP_001104295.1">
    <property type="nucleotide sequence ID" value="NM_001110825.1"/>
</dbReference>
<dbReference type="RefSeq" id="NP_001390898.1">
    <molecule id="Q9DBY0-3"/>
    <property type="nucleotide sequence ID" value="NM_001403969.1"/>
</dbReference>
<dbReference type="RefSeq" id="NP_083043.2">
    <molecule id="Q9DBY0-2"/>
    <property type="nucleotide sequence ID" value="NM_028767.3"/>
</dbReference>
<dbReference type="SMR" id="Q9DBY0"/>
<dbReference type="BioGRID" id="216509">
    <property type="interactions" value="3"/>
</dbReference>
<dbReference type="FunCoup" id="Q9DBY0">
    <property type="interactions" value="1594"/>
</dbReference>
<dbReference type="IntAct" id="Q9DBY0">
    <property type="interactions" value="1"/>
</dbReference>
<dbReference type="STRING" id="10090.ENSMUSP00000094916"/>
<dbReference type="iPTMnet" id="Q9DBY0"/>
<dbReference type="PhosphoSitePlus" id="Q9DBY0"/>
<dbReference type="PaxDb" id="10090-ENSMUSP00000094916"/>
<dbReference type="ProteomicsDB" id="267618">
    <molecule id="Q9DBY0-1"/>
</dbReference>
<dbReference type="ProteomicsDB" id="267619">
    <molecule id="Q9DBY0-2"/>
</dbReference>
<dbReference type="ProteomicsDB" id="267620">
    <molecule id="Q9DBY0-3"/>
</dbReference>
<dbReference type="Pumba" id="Q9DBY0"/>
<dbReference type="Antibodypedia" id="1453">
    <property type="antibodies" value="288 antibodies from 35 providers"/>
</dbReference>
<dbReference type="DNASU" id="74123"/>
<dbReference type="Ensembl" id="ENSMUST00000113265.8">
    <molecule id="Q9DBY0-2"/>
    <property type="protein sequence ID" value="ENSMUSP00000108890.2"/>
    <property type="gene ID" value="ENSMUSG00000023991.17"/>
</dbReference>
<dbReference type="GeneID" id="74123"/>
<dbReference type="KEGG" id="mmu:74123"/>
<dbReference type="UCSC" id="uc008cwm.2">
    <molecule id="Q9DBY0-3"/>
    <property type="organism name" value="mouse"/>
</dbReference>
<dbReference type="UCSC" id="uc008cwn.2">
    <molecule id="Q9DBY0-2"/>
    <property type="organism name" value="mouse"/>
</dbReference>
<dbReference type="AGR" id="MGI:1921373"/>
<dbReference type="CTD" id="116113"/>
<dbReference type="MGI" id="MGI:1921373">
    <property type="gene designation" value="Foxp4"/>
</dbReference>
<dbReference type="VEuPathDB" id="HostDB:ENSMUSG00000023991"/>
<dbReference type="eggNOG" id="KOG4385">
    <property type="taxonomic scope" value="Eukaryota"/>
</dbReference>
<dbReference type="GeneTree" id="ENSGT00940000158700"/>
<dbReference type="HOGENOM" id="CLU_019502_3_1_1"/>
<dbReference type="InParanoid" id="Q9DBY0"/>
<dbReference type="OrthoDB" id="5830876at2759"/>
<dbReference type="PhylomeDB" id="Q9DBY0"/>
<dbReference type="TreeFam" id="TF326978"/>
<dbReference type="BioGRID-ORCS" id="74123">
    <property type="hits" value="4 hits in 80 CRISPR screens"/>
</dbReference>
<dbReference type="ChiTaRS" id="Foxp4">
    <property type="organism name" value="mouse"/>
</dbReference>
<dbReference type="PRO" id="PR:Q9DBY0"/>
<dbReference type="Proteomes" id="UP000000589">
    <property type="component" value="Chromosome 17"/>
</dbReference>
<dbReference type="RNAct" id="Q9DBY0">
    <property type="molecule type" value="protein"/>
</dbReference>
<dbReference type="Bgee" id="ENSMUSG00000023991">
    <property type="expression patterns" value="Expressed in sphenoid bone and 131 other cell types or tissues"/>
</dbReference>
<dbReference type="ExpressionAtlas" id="Q9DBY0">
    <property type="expression patterns" value="baseline and differential"/>
</dbReference>
<dbReference type="GO" id="GO:0005634">
    <property type="term" value="C:nucleus"/>
    <property type="evidence" value="ECO:0007669"/>
    <property type="project" value="UniProtKB-SubCell"/>
</dbReference>
<dbReference type="GO" id="GO:0003677">
    <property type="term" value="F:DNA binding"/>
    <property type="evidence" value="ECO:0000314"/>
    <property type="project" value="MGI"/>
</dbReference>
<dbReference type="GO" id="GO:0001227">
    <property type="term" value="F:DNA-binding transcription repressor activity, RNA polymerase II-specific"/>
    <property type="evidence" value="ECO:0000314"/>
    <property type="project" value="NTNU_SB"/>
</dbReference>
<dbReference type="GO" id="GO:0042802">
    <property type="term" value="F:identical protein binding"/>
    <property type="evidence" value="ECO:0000353"/>
    <property type="project" value="MGI"/>
</dbReference>
<dbReference type="GO" id="GO:0000978">
    <property type="term" value="F:RNA polymerase II cis-regulatory region sequence-specific DNA binding"/>
    <property type="evidence" value="ECO:0000315"/>
    <property type="project" value="NTNU_SB"/>
</dbReference>
<dbReference type="GO" id="GO:0008270">
    <property type="term" value="F:zinc ion binding"/>
    <property type="evidence" value="ECO:0007669"/>
    <property type="project" value="UniProtKB-KW"/>
</dbReference>
<dbReference type="GO" id="GO:0048617">
    <property type="term" value="P:embryonic foregut morphogenesis"/>
    <property type="evidence" value="ECO:0000315"/>
    <property type="project" value="MGI"/>
</dbReference>
<dbReference type="GO" id="GO:0007507">
    <property type="term" value="P:heart development"/>
    <property type="evidence" value="ECO:0000315"/>
    <property type="project" value="MGI"/>
</dbReference>
<dbReference type="GO" id="GO:0061140">
    <property type="term" value="P:lung secretory cell differentiation"/>
    <property type="evidence" value="ECO:0000316"/>
    <property type="project" value="MGI"/>
</dbReference>
<dbReference type="GO" id="GO:1901250">
    <property type="term" value="P:negative regulation of lung goblet cell differentiation"/>
    <property type="evidence" value="ECO:0000316"/>
    <property type="project" value="MGI"/>
</dbReference>
<dbReference type="GO" id="GO:0000122">
    <property type="term" value="P:negative regulation of transcription by RNA polymerase II"/>
    <property type="evidence" value="ECO:0000314"/>
    <property type="project" value="NTNU_SB"/>
</dbReference>
<dbReference type="GO" id="GO:1901249">
    <property type="term" value="P:regulation of lung goblet cell differentiation"/>
    <property type="evidence" value="ECO:0000316"/>
    <property type="project" value="MGI"/>
</dbReference>
<dbReference type="CDD" id="cd20067">
    <property type="entry name" value="FH_FOXP4"/>
    <property type="match status" value="1"/>
</dbReference>
<dbReference type="FunFam" id="1.20.5.340:FF:000005">
    <property type="entry name" value="Forkhead box P1, isoform CRA_f"/>
    <property type="match status" value="1"/>
</dbReference>
<dbReference type="FunFam" id="1.10.10.10:FF:000010">
    <property type="entry name" value="Forkhead box P2 isoform B"/>
    <property type="match status" value="1"/>
</dbReference>
<dbReference type="Gene3D" id="1.20.5.340">
    <property type="match status" value="1"/>
</dbReference>
<dbReference type="Gene3D" id="1.10.10.10">
    <property type="entry name" value="Winged helix-like DNA-binding domain superfamily/Winged helix DNA-binding domain"/>
    <property type="match status" value="1"/>
</dbReference>
<dbReference type="InterPro" id="IPR047414">
    <property type="entry name" value="FH_FOXP4"/>
</dbReference>
<dbReference type="InterPro" id="IPR001766">
    <property type="entry name" value="Fork_head_dom"/>
</dbReference>
<dbReference type="InterPro" id="IPR050998">
    <property type="entry name" value="FOXP"/>
</dbReference>
<dbReference type="InterPro" id="IPR032354">
    <property type="entry name" value="FOXP-CC"/>
</dbReference>
<dbReference type="InterPro" id="IPR030456">
    <property type="entry name" value="TF_fork_head_CS_2"/>
</dbReference>
<dbReference type="InterPro" id="IPR036388">
    <property type="entry name" value="WH-like_DNA-bd_sf"/>
</dbReference>
<dbReference type="InterPro" id="IPR036390">
    <property type="entry name" value="WH_DNA-bd_sf"/>
</dbReference>
<dbReference type="PANTHER" id="PTHR45796">
    <property type="entry name" value="FORKHEAD BOX P, ISOFORM C"/>
    <property type="match status" value="1"/>
</dbReference>
<dbReference type="PANTHER" id="PTHR45796:SF7">
    <property type="entry name" value="FORKHEAD BOX PROTEIN P4"/>
    <property type="match status" value="1"/>
</dbReference>
<dbReference type="Pfam" id="PF00250">
    <property type="entry name" value="Forkhead"/>
    <property type="match status" value="1"/>
</dbReference>
<dbReference type="Pfam" id="PF16159">
    <property type="entry name" value="FOXP-CC"/>
    <property type="match status" value="1"/>
</dbReference>
<dbReference type="PRINTS" id="PR00053">
    <property type="entry name" value="FORKHEAD"/>
</dbReference>
<dbReference type="SMART" id="SM00339">
    <property type="entry name" value="FH"/>
    <property type="match status" value="1"/>
</dbReference>
<dbReference type="SUPFAM" id="SSF46785">
    <property type="entry name" value="Winged helix' DNA-binding domain"/>
    <property type="match status" value="1"/>
</dbReference>
<dbReference type="PROSITE" id="PS00658">
    <property type="entry name" value="FORK_HEAD_2"/>
    <property type="match status" value="1"/>
</dbReference>
<dbReference type="PROSITE" id="PS50039">
    <property type="entry name" value="FORK_HEAD_3"/>
    <property type="match status" value="1"/>
</dbReference>
<dbReference type="PROSITE" id="PS00028">
    <property type="entry name" value="ZINC_FINGER_C2H2_1"/>
    <property type="match status" value="1"/>
</dbReference>
<evidence type="ECO:0000250" key="1">
    <source>
        <dbReference type="UniProtKB" id="Q8IVH2"/>
    </source>
</evidence>
<evidence type="ECO:0000255" key="2"/>
<evidence type="ECO:0000255" key="3">
    <source>
        <dbReference type="PROSITE-ProRule" id="PRU00089"/>
    </source>
</evidence>
<evidence type="ECO:0000256" key="4">
    <source>
        <dbReference type="SAM" id="MobiDB-lite"/>
    </source>
</evidence>
<evidence type="ECO:0000269" key="5">
    <source>
    </source>
</evidence>
<evidence type="ECO:0000269" key="6">
    <source>
    </source>
</evidence>
<evidence type="ECO:0000269" key="7">
    <source>
    </source>
</evidence>
<evidence type="ECO:0000269" key="8">
    <source>
    </source>
</evidence>
<evidence type="ECO:0000269" key="9">
    <source>
    </source>
</evidence>
<evidence type="ECO:0000303" key="10">
    <source>
    </source>
</evidence>
<evidence type="ECO:0000303" key="11">
    <source>
    </source>
</evidence>
<evidence type="ECO:0000303" key="12">
    <source ref="2"/>
</evidence>
<evidence type="ECO:0000305" key="13"/>
<evidence type="ECO:0000312" key="14">
    <source>
        <dbReference type="EMBL" id="AAH43702.1"/>
    </source>
</evidence>
<evidence type="ECO:0000312" key="15">
    <source>
        <dbReference type="EMBL" id="AAH52407.1"/>
    </source>
</evidence>
<evidence type="ECO:0000312" key="16">
    <source>
        <dbReference type="EMBL" id="AAN08624.1"/>
    </source>
</evidence>
<evidence type="ECO:0000312" key="17">
    <source>
        <dbReference type="EMBL" id="BAB23479.1"/>
    </source>
</evidence>
<evidence type="ECO:0000312" key="18">
    <source>
        <dbReference type="EMBL" id="BAC53799.1"/>
    </source>
</evidence>
<evidence type="ECO:0000312" key="19">
    <source>
        <dbReference type="MGI" id="MGI:1921373"/>
    </source>
</evidence>
<comment type="function">
    <text evidence="7">Transcriptional repressor that represses lung-specific expression.</text>
</comment>
<comment type="subunit">
    <text evidence="7">Forms homodimers and heterodimers with FOXP1 and FOXP2. Dimerization is required for DNA-binding.</text>
</comment>
<comment type="subcellular location">
    <subcellularLocation>
        <location evidence="2 13">Nucleus</location>
    </subcellularLocation>
</comment>
<comment type="alternative products">
    <event type="alternative splicing"/>
    <isoform>
        <id>Q9DBY0-1</id>
        <name evidence="9">1</name>
        <sequence type="displayed"/>
    </isoform>
    <isoform>
        <id>Q9DBY0-2</id>
        <name evidence="8">2</name>
        <sequence type="described" ref="VSP_052130 VSP_052131"/>
    </isoform>
    <isoform>
        <id>Q9DBY0-3</id>
        <name evidence="8">3</name>
        <sequence type="described" ref="VSP_052129 VSP_052130 VSP_052131"/>
    </isoform>
</comment>
<comment type="tissue specificity">
    <text evidence="5 6">Expressed in the adult heart, brain, spleen lung, liver, kidney and testes.</text>
</comment>
<comment type="developmental stage">
    <text evidence="5 6">Expressed predominantly in the lung and brain during embryogenesis. Expressed in the lung epithelium and the mesenchyme immediately adjacent to the epithelium from 10.5 dpc. At 9.5 dpc, expressed in the foregut endoderm but not in the heart. At 16.5 and 18.5 dpc, expressed in both the proximal and distal airway epithelium. Also expressed in the developing gut. In the hindgut, primarily expressed in epithelial cells of the intestine and stomach. Expressed in the brain in a dynamic pattern. At 14.5 dpc, expressed at high levels in the intermediate zone of the neopallial cortex with lower levels in the surrounding cells. By 16.5 dpc, no longer expressed in the intermediate zone, but still present in the surrounding cells of the neopallial cortex.</text>
</comment>
<comment type="domain">
    <text evidence="7">The leucine-zipper is required for dimerization and transcriptional repression.</text>
</comment>
<keyword id="KW-0025">Alternative splicing</keyword>
<keyword id="KW-0238">DNA-binding</keyword>
<keyword id="KW-1017">Isopeptide bond</keyword>
<keyword id="KW-0479">Metal-binding</keyword>
<keyword id="KW-0539">Nucleus</keyword>
<keyword id="KW-0597">Phosphoprotein</keyword>
<keyword id="KW-1185">Reference proteome</keyword>
<keyword id="KW-0678">Repressor</keyword>
<keyword id="KW-0804">Transcription</keyword>
<keyword id="KW-0805">Transcription regulation</keyword>
<keyword id="KW-0832">Ubl conjugation</keyword>
<keyword id="KW-0862">Zinc</keyword>
<keyword id="KW-0863">Zinc-finger</keyword>
<organism>
    <name type="scientific">Mus musculus</name>
    <name type="common">Mouse</name>
    <dbReference type="NCBI Taxonomy" id="10090"/>
    <lineage>
        <taxon>Eukaryota</taxon>
        <taxon>Metazoa</taxon>
        <taxon>Chordata</taxon>
        <taxon>Craniata</taxon>
        <taxon>Vertebrata</taxon>
        <taxon>Euteleostomi</taxon>
        <taxon>Mammalia</taxon>
        <taxon>Eutheria</taxon>
        <taxon>Euarchontoglires</taxon>
        <taxon>Glires</taxon>
        <taxon>Rodentia</taxon>
        <taxon>Myomorpha</taxon>
        <taxon>Muroidea</taxon>
        <taxon>Muridae</taxon>
        <taxon>Murinae</taxon>
        <taxon>Mus</taxon>
        <taxon>Mus</taxon>
    </lineage>
</organism>
<accession>Q9DBY0</accession>
<accession>Q80V92</accession>
<accession>Q8CG10</accession>
<accession>Q8CIS1</accession>
<proteinExistence type="evidence at protein level"/>
<name>FOXP4_MOUSE</name>
<sequence length="795" mass="85981">MMVESASETIRSAPSGQNGVGSLSAQADGGGGAGTAGTAPAAGRDASGREAASGGADSNGEMSPAELLHFQQQQALQVARQFLLQQASSLNSPGNNDSKQSASAVQVPVSVAMMSQQMLTPQQMQQILSPPQLQALLQQQQALMLQQLQEYYKKQQEQLHLQLLTQQQAGKQQPKEALGNKQLAFQQQLLQMQQLQQQHLLNLQRQGLVSLQPSQASGPLQALPQAVCPTDLPQLWKGEGAPGQPAEDSGRQEGLDLASTAVTATSFASPPKVSPPLSHHPLPNGQPTVLTSRRDSSSHEETPSSHPLYGHGECKWPGCETLCEDLGQFIKHLNTEHALDDRSTAQCRVQMQVVQQLEIQLAKESERLQAMMAHLHMRPSEPKPFSQPVTVSADPFPDGLVHPPTSAAAPVTPLRPPGLGSASLHSGGPARRRSNDKFCSPISSELAQNHEFYKNADVRPPFTYASLIRQAILETPDRQLTLNEIYNWFTRMFAYFRRNTATWKNAVRHNLSLHKCFVRVENVKGAVWTVDEREYQKRRPPKMTGSPTLVKNMISGLSYGALNASYQAALAESSFPLLSNPGMLNPGSASSLLPLSQEDLGVPGEPLPSNGSSSPPRLSPPQYSHQIQVKEEPAEAEEDRRPGPPLGAPNPSTVGPPEDRDLEEDLGGEDMPSQPCPLIPGWKPSLLHLSYCVKPKFTVSVGSKTPSSPLPPPPRVQGSYSLPPCSYLAYGDMRGQNPAPSPGLLSGVGGGLFRCLHRTKSPSLPGVWILAAELETMRFHRPPMGDPQPKTADWV</sequence>